<organism>
    <name type="scientific">Mus musculus</name>
    <name type="common">Mouse</name>
    <dbReference type="NCBI Taxonomy" id="10090"/>
    <lineage>
        <taxon>Eukaryota</taxon>
        <taxon>Metazoa</taxon>
        <taxon>Chordata</taxon>
        <taxon>Craniata</taxon>
        <taxon>Vertebrata</taxon>
        <taxon>Euteleostomi</taxon>
        <taxon>Mammalia</taxon>
        <taxon>Eutheria</taxon>
        <taxon>Euarchontoglires</taxon>
        <taxon>Glires</taxon>
        <taxon>Rodentia</taxon>
        <taxon>Myomorpha</taxon>
        <taxon>Muroidea</taxon>
        <taxon>Muridae</taxon>
        <taxon>Murinae</taxon>
        <taxon>Mus</taxon>
        <taxon>Mus</taxon>
    </lineage>
</organism>
<keyword id="KW-1003">Cell membrane</keyword>
<keyword id="KW-0407">Ion channel</keyword>
<keyword id="KW-0406">Ion transport</keyword>
<keyword id="KW-0472">Membrane</keyword>
<keyword id="KW-0630">Potassium</keyword>
<keyword id="KW-0631">Potassium channel</keyword>
<keyword id="KW-0633">Potassium transport</keyword>
<keyword id="KW-1185">Reference proteome</keyword>
<keyword id="KW-0812">Transmembrane</keyword>
<keyword id="KW-1133">Transmembrane helix</keyword>
<keyword id="KW-0813">Transport</keyword>
<keyword id="KW-0851">Voltage-gated channel</keyword>
<proteinExistence type="evidence at protein level"/>
<evidence type="ECO:0000250" key="1">
    <source>
        <dbReference type="UniProtKB" id="P63142"/>
    </source>
</evidence>
<evidence type="ECO:0000250" key="2">
    <source>
        <dbReference type="UniProtKB" id="Q96KK3"/>
    </source>
</evidence>
<evidence type="ECO:0000256" key="3">
    <source>
        <dbReference type="SAM" id="MobiDB-lite"/>
    </source>
</evidence>
<evidence type="ECO:0000269" key="4">
    <source>
    </source>
</evidence>
<evidence type="ECO:0000305" key="5"/>
<evidence type="ECO:0000305" key="6">
    <source>
    </source>
</evidence>
<evidence type="ECO:0000312" key="7">
    <source>
        <dbReference type="MGI" id="MGI:1197019"/>
    </source>
</evidence>
<sequence length="497" mass="54918">MVSEFPGPGSRVPWRPRDEALRVNVGGVRRLLSARALARFPGTRLGRLQAAASEEQARRLCDDYDAAAHEFYFDRHPGFFLGLLHFYRTGHLHVLDELCVFAFGQEADYWGLGENALATCCRARYLERRVARPRAWDEDSDAPSSVDPCPDEISDVQRELARYGAARCGRLRRRLWLTMENPGYSLPSKLFSCVSIGVVLASIAAMCIHSLPEYQAREAAAAVAAVAAGRSAEEVRDDPVLRRLEYFCIAWFSFEVSSRLLLAPSTRNFFCHPLNLIDIVSVLPFYLTLLAGAALGDQRGASGEELGDLGKVVQVFRLMRIFRVLKLARHSTGLRSLGATLKHSYREVGILLLYLAVGVSVFSGVAYTAEEENEGFHTIPACWWWGTVSMTTVGYGDVVPETVGGKLAASGCILGGILVVALPITIIFNKFSHFYRRQKALEAAVRSSGQREFEDLLSSVDGVSDVSLETSRDTSQEGRSTDLETQAPREPAKSHSY</sequence>
<dbReference type="EMBL" id="AF008573">
    <property type="protein sequence ID" value="AAB72050.1"/>
    <property type="molecule type" value="mRNA"/>
</dbReference>
<dbReference type="EMBL" id="AL591512">
    <property type="status" value="NOT_ANNOTATED_CDS"/>
    <property type="molecule type" value="Genomic_DNA"/>
</dbReference>
<dbReference type="EMBL" id="CH466551">
    <property type="protein sequence ID" value="EDL06364.1"/>
    <property type="molecule type" value="Genomic_DNA"/>
</dbReference>
<dbReference type="CCDS" id="CCDS17022.1"/>
<dbReference type="RefSeq" id="NP_032461.2">
    <property type="nucleotide sequence ID" value="NM_008435.2"/>
</dbReference>
<dbReference type="RefSeq" id="XP_036014685.1">
    <property type="nucleotide sequence ID" value="XM_036158792.1"/>
</dbReference>
<dbReference type="SMR" id="O35173"/>
<dbReference type="BioGRID" id="200919">
    <property type="interactions" value="7"/>
</dbReference>
<dbReference type="CORUM" id="O35173"/>
<dbReference type="FunCoup" id="O35173">
    <property type="interactions" value="16"/>
</dbReference>
<dbReference type="STRING" id="10090.ENSMUSP00000038901"/>
<dbReference type="iPTMnet" id="O35173"/>
<dbReference type="PhosphoSitePlus" id="O35173"/>
<dbReference type="PaxDb" id="10090-ENSMUSP00000038901"/>
<dbReference type="ProteomicsDB" id="263504"/>
<dbReference type="ABCD" id="O35173">
    <property type="antibodies" value="1 sequenced antibody"/>
</dbReference>
<dbReference type="Antibodypedia" id="27521">
    <property type="antibodies" value="58 antibodies from 19 providers"/>
</dbReference>
<dbReference type="DNASU" id="16538"/>
<dbReference type="Ensembl" id="ENSMUST00000045196.4">
    <property type="protein sequence ID" value="ENSMUSP00000038901.4"/>
    <property type="gene ID" value="ENSMUSG00000040164.4"/>
</dbReference>
<dbReference type="GeneID" id="16538"/>
<dbReference type="KEGG" id="mmu:16538"/>
<dbReference type="UCSC" id="uc008ntv.1">
    <property type="organism name" value="mouse"/>
</dbReference>
<dbReference type="AGR" id="MGI:1197019"/>
<dbReference type="CTD" id="3787"/>
<dbReference type="MGI" id="MGI:1197019">
    <property type="gene designation" value="Kcns1"/>
</dbReference>
<dbReference type="VEuPathDB" id="HostDB:ENSMUSG00000040164"/>
<dbReference type="eggNOG" id="KOG3713">
    <property type="taxonomic scope" value="Eukaryota"/>
</dbReference>
<dbReference type="GeneTree" id="ENSGT00940000160096"/>
<dbReference type="HOGENOM" id="CLU_011722_4_1_1"/>
<dbReference type="InParanoid" id="O35173"/>
<dbReference type="OMA" id="CSGRYHE"/>
<dbReference type="OrthoDB" id="296522at2759"/>
<dbReference type="PhylomeDB" id="O35173"/>
<dbReference type="TreeFam" id="TF313103"/>
<dbReference type="Reactome" id="R-MMU-1296072">
    <property type="pathway name" value="Voltage gated Potassium channels"/>
</dbReference>
<dbReference type="BioGRID-ORCS" id="16538">
    <property type="hits" value="2 hits in 77 CRISPR screens"/>
</dbReference>
<dbReference type="ChiTaRS" id="Kcns1">
    <property type="organism name" value="mouse"/>
</dbReference>
<dbReference type="PRO" id="PR:O35173"/>
<dbReference type="Proteomes" id="UP000000589">
    <property type="component" value="Chromosome 2"/>
</dbReference>
<dbReference type="RNAct" id="O35173">
    <property type="molecule type" value="protein"/>
</dbReference>
<dbReference type="Bgee" id="ENSMUSG00000040164">
    <property type="expression patterns" value="Expressed in lumbar dorsal root ganglion and 34 other cell types or tissues"/>
</dbReference>
<dbReference type="GO" id="GO:0005654">
    <property type="term" value="C:nucleoplasm"/>
    <property type="evidence" value="ECO:0007669"/>
    <property type="project" value="Ensembl"/>
</dbReference>
<dbReference type="GO" id="GO:0048471">
    <property type="term" value="C:perinuclear region of cytoplasm"/>
    <property type="evidence" value="ECO:0000314"/>
    <property type="project" value="UniProtKB"/>
</dbReference>
<dbReference type="GO" id="GO:0005886">
    <property type="term" value="C:plasma membrane"/>
    <property type="evidence" value="ECO:0000314"/>
    <property type="project" value="UniProtKB"/>
</dbReference>
<dbReference type="GO" id="GO:0008076">
    <property type="term" value="C:voltage-gated potassium channel complex"/>
    <property type="evidence" value="ECO:0000314"/>
    <property type="project" value="UniProtKB"/>
</dbReference>
<dbReference type="GO" id="GO:0015459">
    <property type="term" value="F:potassium channel regulator activity"/>
    <property type="evidence" value="ECO:0000314"/>
    <property type="project" value="UniProtKB"/>
</dbReference>
<dbReference type="GO" id="GO:0005249">
    <property type="term" value="F:voltage-gated potassium channel activity"/>
    <property type="evidence" value="ECO:0007669"/>
    <property type="project" value="InterPro"/>
</dbReference>
<dbReference type="GO" id="GO:0006813">
    <property type="term" value="P:potassium ion transport"/>
    <property type="evidence" value="ECO:0000314"/>
    <property type="project" value="UniProtKB"/>
</dbReference>
<dbReference type="GO" id="GO:0051260">
    <property type="term" value="P:protein homooligomerization"/>
    <property type="evidence" value="ECO:0007669"/>
    <property type="project" value="InterPro"/>
</dbReference>
<dbReference type="GO" id="GO:1901379">
    <property type="term" value="P:regulation of potassium ion transmembrane transport"/>
    <property type="evidence" value="ECO:0000314"/>
    <property type="project" value="UniProtKB"/>
</dbReference>
<dbReference type="FunFam" id="1.10.287.70:FF:000005">
    <property type="entry name" value="potassium voltage-gated channel subfamily G member 1"/>
    <property type="match status" value="1"/>
</dbReference>
<dbReference type="FunFam" id="3.30.710.10:FF:000102">
    <property type="entry name" value="Potassium voltage-gated channel subfamily S member 1"/>
    <property type="match status" value="1"/>
</dbReference>
<dbReference type="FunFam" id="1.20.120.350:FF:000029">
    <property type="entry name" value="Potassium voltage-gated channel subfamily S member 2"/>
    <property type="match status" value="1"/>
</dbReference>
<dbReference type="Gene3D" id="1.10.287.70">
    <property type="match status" value="1"/>
</dbReference>
<dbReference type="Gene3D" id="3.30.710.10">
    <property type="entry name" value="Potassium Channel Kv1.1, Chain A"/>
    <property type="match status" value="1"/>
</dbReference>
<dbReference type="Gene3D" id="1.20.120.350">
    <property type="entry name" value="Voltage-gated potassium channels. Chain C"/>
    <property type="match status" value="1"/>
</dbReference>
<dbReference type="InterPro" id="IPR000210">
    <property type="entry name" value="BTB/POZ_dom"/>
</dbReference>
<dbReference type="InterPro" id="IPR005821">
    <property type="entry name" value="Ion_trans_dom"/>
</dbReference>
<dbReference type="InterPro" id="IPR003968">
    <property type="entry name" value="K_chnl_volt-dep_Kv"/>
</dbReference>
<dbReference type="InterPro" id="IPR003971">
    <property type="entry name" value="K_chnl_volt-dep_Kv5/Kv9"/>
</dbReference>
<dbReference type="InterPro" id="IPR011333">
    <property type="entry name" value="SKP1/BTB/POZ_sf"/>
</dbReference>
<dbReference type="InterPro" id="IPR003131">
    <property type="entry name" value="T1-type_BTB"/>
</dbReference>
<dbReference type="InterPro" id="IPR028325">
    <property type="entry name" value="VG_K_chnl"/>
</dbReference>
<dbReference type="InterPro" id="IPR027359">
    <property type="entry name" value="Volt_channel_dom_sf"/>
</dbReference>
<dbReference type="PANTHER" id="PTHR11537:SF61">
    <property type="entry name" value="POTASSIUM VOLTAGE-GATED CHANNEL SUBFAMILY S MEMBER 1"/>
    <property type="match status" value="1"/>
</dbReference>
<dbReference type="PANTHER" id="PTHR11537">
    <property type="entry name" value="VOLTAGE-GATED POTASSIUM CHANNEL"/>
    <property type="match status" value="1"/>
</dbReference>
<dbReference type="Pfam" id="PF02214">
    <property type="entry name" value="BTB_2"/>
    <property type="match status" value="1"/>
</dbReference>
<dbReference type="Pfam" id="PF00520">
    <property type="entry name" value="Ion_trans"/>
    <property type="match status" value="1"/>
</dbReference>
<dbReference type="PRINTS" id="PR00169">
    <property type="entry name" value="KCHANNEL"/>
</dbReference>
<dbReference type="PRINTS" id="PR01494">
    <property type="entry name" value="KV9CHANNEL"/>
</dbReference>
<dbReference type="PRINTS" id="PR01491">
    <property type="entry name" value="KVCHANNEL"/>
</dbReference>
<dbReference type="SMART" id="SM00225">
    <property type="entry name" value="BTB"/>
    <property type="match status" value="1"/>
</dbReference>
<dbReference type="SUPFAM" id="SSF54695">
    <property type="entry name" value="POZ domain"/>
    <property type="match status" value="1"/>
</dbReference>
<dbReference type="SUPFAM" id="SSF81324">
    <property type="entry name" value="Voltage-gated potassium channels"/>
    <property type="match status" value="1"/>
</dbReference>
<protein>
    <recommendedName>
        <fullName evidence="5">Delayed-rectifier potassium channel regulatory subunit KCNS1</fullName>
    </recommendedName>
    <alternativeName>
        <fullName>Delayed-rectifier K(+) channel alpha subunit 1</fullName>
    </alternativeName>
    <alternativeName>
        <fullName>Delayed-rectifier potassium channel subunit Kv9.1</fullName>
    </alternativeName>
    <alternativeName>
        <fullName>Potassium voltage-gated channel modifier subfamily S member 1</fullName>
    </alternativeName>
</protein>
<name>KCNS1_MOUSE</name>
<gene>
    <name evidence="7" type="primary">Kcns1</name>
</gene>
<reference key="1">
    <citation type="journal article" date="1997" name="J. Biol. Chem.">
        <title>New modulatory alpha subunits for mammalian Shab K+ channels.</title>
        <authorList>
            <person name="Salinas M."/>
            <person name="Duprat F."/>
            <person name="Heurteaux C."/>
            <person name="Hugnot J.-P."/>
            <person name="Lazdunski M."/>
        </authorList>
    </citation>
    <scope>NUCLEOTIDE SEQUENCE [MRNA]</scope>
    <scope>FUNCTION</scope>
    <scope>SUBUNIT</scope>
    <scope>SUBCELLULAR LOCATION</scope>
    <scope>TISSUE SPECIFICITY</scope>
    <source>
        <tissue>Brain</tissue>
    </source>
</reference>
<reference key="2">
    <citation type="journal article" date="2009" name="PLoS Biol.">
        <title>Lineage-specific biology revealed by a finished genome assembly of the mouse.</title>
        <authorList>
            <person name="Church D.M."/>
            <person name="Goodstadt L."/>
            <person name="Hillier L.W."/>
            <person name="Zody M.C."/>
            <person name="Goldstein S."/>
            <person name="She X."/>
            <person name="Bult C.J."/>
            <person name="Agarwala R."/>
            <person name="Cherry J.L."/>
            <person name="DiCuccio M."/>
            <person name="Hlavina W."/>
            <person name="Kapustin Y."/>
            <person name="Meric P."/>
            <person name="Maglott D."/>
            <person name="Birtle Z."/>
            <person name="Marques A.C."/>
            <person name="Graves T."/>
            <person name="Zhou S."/>
            <person name="Teague B."/>
            <person name="Potamousis K."/>
            <person name="Churas C."/>
            <person name="Place M."/>
            <person name="Herschleb J."/>
            <person name="Runnheim R."/>
            <person name="Forrest D."/>
            <person name="Amos-Landgraf J."/>
            <person name="Schwartz D.C."/>
            <person name="Cheng Z."/>
            <person name="Lindblad-Toh K."/>
            <person name="Eichler E.E."/>
            <person name="Ponting C.P."/>
        </authorList>
    </citation>
    <scope>NUCLEOTIDE SEQUENCE [LARGE SCALE GENOMIC DNA]</scope>
    <source>
        <strain>C57BL/6J</strain>
    </source>
</reference>
<reference key="3">
    <citation type="submission" date="2005-07" db="EMBL/GenBank/DDBJ databases">
        <authorList>
            <person name="Mural R.J."/>
            <person name="Adams M.D."/>
            <person name="Myers E.W."/>
            <person name="Smith H.O."/>
            <person name="Venter J.C."/>
        </authorList>
    </citation>
    <scope>NUCLEOTIDE SEQUENCE [LARGE SCALE GENOMIC DNA]</scope>
</reference>
<comment type="function">
    <text evidence="4">Potassium channel regulatory subunit that modulate the delayed rectifier voltage-gated potassium channel activity of KCNB1 and KCNB2 by altering their kinetics, expression levels, and shifting the half-inactivation potential to more polarized values (PubMed:9305895). While it does not form functional channels on its own, it can form functional heterotetrameric channels with KCNB1 and KCNB2 (PubMed:9305895). Each regulatory subunit has unique regulatory properties that can lead to extensive inhibition, significant changes in kinetics, and/or substantial shifts in the voltage dependencies of the inactivation process (PubMed:9305895).</text>
</comment>
<comment type="subunit">
    <text evidence="6">Heterotetramer with KCNB1 and KCNB2 (Probable). Does not form homomultimers (Probable).</text>
</comment>
<comment type="subcellular location">
    <subcellularLocation>
        <location evidence="2">Cell membrane</location>
        <topology evidence="5">Multi-pass membrane protein</topology>
    </subcellularLocation>
    <text evidence="4">May not reach the plasma membrane but remain in an intracellular compartment in the absence of KCNB1 or KCNB2 (PubMed:9305895).</text>
</comment>
<comment type="tissue specificity">
    <text evidence="4">Detected in brain, but not in the other tissues tested (PubMed:9305895). The highest levels of expression are in olfactory bulb, cerebral cortex, hippocampus, habenula, basolateral amygdaloid nuclei and cerebellum (PubMed:9305895).</text>
</comment>
<comment type="domain">
    <text evidence="1">The transmembrane segment S4 functions as a voltage-sensor and is characterized by a series of positively charged amino acids at every third position. Channel opening and closing is effected by a conformation change that affects the position and orientation of the voltage-sensor paddle formed by S3 and S4 within the membrane. A transmembrane electric field that is positive inside would push the positively charged S4 segment outwards, thereby opening the pore, while a field that is negative inside would pull the S4 segment inwards and close the pore. Changes in the position and orientation of S4 are then transmitted to the activation gate formed by the inner helix bundle via the S4-S5 linker region.</text>
</comment>
<comment type="similarity">
    <text evidence="5">Belongs to the potassium channel family. S (TC 1.A.1.2) subfamily. Kv9.1/KCNS1 sub-subfamily.</text>
</comment>
<feature type="chain" id="PRO_0000054082" description="Delayed-rectifier potassium channel regulatory subunit KCNS1">
    <location>
        <begin position="1"/>
        <end position="497"/>
    </location>
</feature>
<feature type="topological domain" description="Cytoplasmic" evidence="1">
    <location>
        <begin position="1"/>
        <end position="186"/>
    </location>
</feature>
<feature type="transmembrane region" description="Helical; Name=Segment S1" evidence="1">
    <location>
        <begin position="187"/>
        <end position="208"/>
    </location>
</feature>
<feature type="topological domain" description="Extracellular" evidence="1">
    <location>
        <begin position="209"/>
        <end position="239"/>
    </location>
</feature>
<feature type="transmembrane region" description="Helical; Name=Segment S2" evidence="1">
    <location>
        <begin position="240"/>
        <end position="262"/>
    </location>
</feature>
<feature type="topological domain" description="Cytoplasmic" evidence="1">
    <location>
        <begin position="263"/>
        <end position="273"/>
    </location>
</feature>
<feature type="transmembrane region" description="Helical; Name=Segment S3" evidence="1">
    <location>
        <begin position="274"/>
        <end position="291"/>
    </location>
</feature>
<feature type="topological domain" description="Extracellular" evidence="1">
    <location>
        <begin position="292"/>
        <end position="309"/>
    </location>
</feature>
<feature type="transmembrane region" description="Helical; Voltage-sensor; Name=Segment S4" evidence="1">
    <location>
        <begin position="310"/>
        <end position="330"/>
    </location>
</feature>
<feature type="topological domain" description="Cytoplasmic" evidence="1">
    <location>
        <begin position="331"/>
        <end position="345"/>
    </location>
</feature>
<feature type="transmembrane region" description="Helical; Name=Segment S5" evidence="1">
    <location>
        <begin position="346"/>
        <end position="367"/>
    </location>
</feature>
<feature type="topological domain" description="Extracellular" evidence="1">
    <location>
        <begin position="368"/>
        <end position="379"/>
    </location>
</feature>
<feature type="intramembrane region" description="Helical; Name=Pore helix" evidence="1">
    <location>
        <begin position="380"/>
        <end position="391"/>
    </location>
</feature>
<feature type="intramembrane region" evidence="1">
    <location>
        <begin position="392"/>
        <end position="399"/>
    </location>
</feature>
<feature type="topological domain" description="Extracellular" evidence="1">
    <location>
        <begin position="400"/>
        <end position="406"/>
    </location>
</feature>
<feature type="transmembrane region" description="Helical; Name=Segment S6" evidence="1">
    <location>
        <begin position="407"/>
        <end position="435"/>
    </location>
</feature>
<feature type="topological domain" description="Cytoplasmic" evidence="1">
    <location>
        <begin position="436"/>
        <end position="497"/>
    </location>
</feature>
<feature type="region of interest" description="Disordered" evidence="3">
    <location>
        <begin position="464"/>
        <end position="497"/>
    </location>
</feature>
<feature type="short sequence motif" description="Selectivity filter" evidence="1">
    <location>
        <begin position="392"/>
        <end position="397"/>
    </location>
</feature>
<feature type="compositionally biased region" description="Basic and acidic residues" evidence="3">
    <location>
        <begin position="470"/>
        <end position="482"/>
    </location>
</feature>
<feature type="sequence conflict" description="In Ref. 1; AAB72050." evidence="5" ref="1">
    <original>A</original>
    <variation>G</variation>
    <location>
        <position position="440"/>
    </location>
</feature>
<accession>O35173</accession>
<accession>A2A5M1</accession>